<name>RS10_PECAS</name>
<gene>
    <name evidence="1" type="primary">rpsJ</name>
    <name type="ordered locus">ECA4032</name>
</gene>
<organism>
    <name type="scientific">Pectobacterium atrosepticum (strain SCRI 1043 / ATCC BAA-672)</name>
    <name type="common">Erwinia carotovora subsp. atroseptica</name>
    <dbReference type="NCBI Taxonomy" id="218491"/>
    <lineage>
        <taxon>Bacteria</taxon>
        <taxon>Pseudomonadati</taxon>
        <taxon>Pseudomonadota</taxon>
        <taxon>Gammaproteobacteria</taxon>
        <taxon>Enterobacterales</taxon>
        <taxon>Pectobacteriaceae</taxon>
        <taxon>Pectobacterium</taxon>
    </lineage>
</organism>
<keyword id="KW-1185">Reference proteome</keyword>
<keyword id="KW-0687">Ribonucleoprotein</keyword>
<keyword id="KW-0689">Ribosomal protein</keyword>
<proteinExistence type="inferred from homology"/>
<protein>
    <recommendedName>
        <fullName evidence="1">Small ribosomal subunit protein uS10</fullName>
    </recommendedName>
    <alternativeName>
        <fullName evidence="2">30S ribosomal protein S10</fullName>
    </alternativeName>
</protein>
<dbReference type="EMBL" id="BX950851">
    <property type="protein sequence ID" value="CAG76929.1"/>
    <property type="molecule type" value="Genomic_DNA"/>
</dbReference>
<dbReference type="RefSeq" id="WP_009639175.1">
    <property type="nucleotide sequence ID" value="NC_004547.2"/>
</dbReference>
<dbReference type="SMR" id="Q6CZW9"/>
<dbReference type="STRING" id="218491.ECA4032"/>
<dbReference type="GeneID" id="95418945"/>
<dbReference type="KEGG" id="eca:ECA4032"/>
<dbReference type="eggNOG" id="COG0051">
    <property type="taxonomic scope" value="Bacteria"/>
</dbReference>
<dbReference type="HOGENOM" id="CLU_122625_1_3_6"/>
<dbReference type="OrthoDB" id="9804464at2"/>
<dbReference type="Proteomes" id="UP000007966">
    <property type="component" value="Chromosome"/>
</dbReference>
<dbReference type="GO" id="GO:1990904">
    <property type="term" value="C:ribonucleoprotein complex"/>
    <property type="evidence" value="ECO:0007669"/>
    <property type="project" value="UniProtKB-KW"/>
</dbReference>
<dbReference type="GO" id="GO:0005840">
    <property type="term" value="C:ribosome"/>
    <property type="evidence" value="ECO:0007669"/>
    <property type="project" value="UniProtKB-KW"/>
</dbReference>
<dbReference type="GO" id="GO:0003735">
    <property type="term" value="F:structural constituent of ribosome"/>
    <property type="evidence" value="ECO:0007669"/>
    <property type="project" value="InterPro"/>
</dbReference>
<dbReference type="GO" id="GO:0000049">
    <property type="term" value="F:tRNA binding"/>
    <property type="evidence" value="ECO:0007669"/>
    <property type="project" value="UniProtKB-UniRule"/>
</dbReference>
<dbReference type="GO" id="GO:0006412">
    <property type="term" value="P:translation"/>
    <property type="evidence" value="ECO:0007669"/>
    <property type="project" value="UniProtKB-UniRule"/>
</dbReference>
<dbReference type="FunFam" id="3.30.70.600:FF:000001">
    <property type="entry name" value="30S ribosomal protein S10"/>
    <property type="match status" value="1"/>
</dbReference>
<dbReference type="Gene3D" id="3.30.70.600">
    <property type="entry name" value="Ribosomal protein S10 domain"/>
    <property type="match status" value="1"/>
</dbReference>
<dbReference type="HAMAP" id="MF_00508">
    <property type="entry name" value="Ribosomal_uS10"/>
    <property type="match status" value="1"/>
</dbReference>
<dbReference type="InterPro" id="IPR001848">
    <property type="entry name" value="Ribosomal_uS10"/>
</dbReference>
<dbReference type="InterPro" id="IPR018268">
    <property type="entry name" value="Ribosomal_uS10_CS"/>
</dbReference>
<dbReference type="InterPro" id="IPR027486">
    <property type="entry name" value="Ribosomal_uS10_dom"/>
</dbReference>
<dbReference type="InterPro" id="IPR036838">
    <property type="entry name" value="Ribosomal_uS10_dom_sf"/>
</dbReference>
<dbReference type="NCBIfam" id="NF001861">
    <property type="entry name" value="PRK00596.1"/>
    <property type="match status" value="1"/>
</dbReference>
<dbReference type="NCBIfam" id="TIGR01049">
    <property type="entry name" value="rpsJ_bact"/>
    <property type="match status" value="1"/>
</dbReference>
<dbReference type="PANTHER" id="PTHR11700">
    <property type="entry name" value="30S RIBOSOMAL PROTEIN S10 FAMILY MEMBER"/>
    <property type="match status" value="1"/>
</dbReference>
<dbReference type="Pfam" id="PF00338">
    <property type="entry name" value="Ribosomal_S10"/>
    <property type="match status" value="1"/>
</dbReference>
<dbReference type="PRINTS" id="PR00971">
    <property type="entry name" value="RIBOSOMALS10"/>
</dbReference>
<dbReference type="SMART" id="SM01403">
    <property type="entry name" value="Ribosomal_S10"/>
    <property type="match status" value="1"/>
</dbReference>
<dbReference type="SUPFAM" id="SSF54999">
    <property type="entry name" value="Ribosomal protein S10"/>
    <property type="match status" value="1"/>
</dbReference>
<dbReference type="PROSITE" id="PS00361">
    <property type="entry name" value="RIBOSOMAL_S10"/>
    <property type="match status" value="1"/>
</dbReference>
<evidence type="ECO:0000255" key="1">
    <source>
        <dbReference type="HAMAP-Rule" id="MF_00508"/>
    </source>
</evidence>
<evidence type="ECO:0000305" key="2"/>
<reference key="1">
    <citation type="journal article" date="2004" name="Proc. Natl. Acad. Sci. U.S.A.">
        <title>Genome sequence of the enterobacterial phytopathogen Erwinia carotovora subsp. atroseptica and characterization of virulence factors.</title>
        <authorList>
            <person name="Bell K.S."/>
            <person name="Sebaihia M."/>
            <person name="Pritchard L."/>
            <person name="Holden M.T.G."/>
            <person name="Hyman L.J."/>
            <person name="Holeva M.C."/>
            <person name="Thomson N.R."/>
            <person name="Bentley S.D."/>
            <person name="Churcher L.J.C."/>
            <person name="Mungall K."/>
            <person name="Atkin R."/>
            <person name="Bason N."/>
            <person name="Brooks K."/>
            <person name="Chillingworth T."/>
            <person name="Clark K."/>
            <person name="Doggett J."/>
            <person name="Fraser A."/>
            <person name="Hance Z."/>
            <person name="Hauser H."/>
            <person name="Jagels K."/>
            <person name="Moule S."/>
            <person name="Norbertczak H."/>
            <person name="Ormond D."/>
            <person name="Price C."/>
            <person name="Quail M.A."/>
            <person name="Sanders M."/>
            <person name="Walker D."/>
            <person name="Whitehead S."/>
            <person name="Salmond G.P.C."/>
            <person name="Birch P.R.J."/>
            <person name="Parkhill J."/>
            <person name="Toth I.K."/>
        </authorList>
    </citation>
    <scope>NUCLEOTIDE SEQUENCE [LARGE SCALE GENOMIC DNA]</scope>
    <source>
        <strain>SCRI 1043 / ATCC BAA-672</strain>
    </source>
</reference>
<comment type="function">
    <text evidence="1">Involved in the binding of tRNA to the ribosomes.</text>
</comment>
<comment type="subunit">
    <text evidence="1">Part of the 30S ribosomal subunit.</text>
</comment>
<comment type="similarity">
    <text evidence="1">Belongs to the universal ribosomal protein uS10 family.</text>
</comment>
<sequence length="103" mass="11781">MQNQRIRIRLKAFDHRLIDQSTAEIVETAKRTGAQVRGPIPLPTRKERFTILISPHVNKDARDQYEIRTHKRLVDIVEPTEKTVDALMRLDLAAGVDVQISLG</sequence>
<feature type="chain" id="PRO_0000237044" description="Small ribosomal subunit protein uS10">
    <location>
        <begin position="1"/>
        <end position="103"/>
    </location>
</feature>
<accession>Q6CZW9</accession>